<gene>
    <name evidence="2" type="primary">tuf</name>
    <name type="ordered locus">ckrop_1849</name>
</gene>
<protein>
    <recommendedName>
        <fullName evidence="2">Elongation factor Tu</fullName>
        <shortName evidence="2">EF-Tu</shortName>
        <ecNumber evidence="2">3.6.5.3</ecNumber>
    </recommendedName>
</protein>
<dbReference type="EC" id="3.6.5.3" evidence="2"/>
<dbReference type="EMBL" id="CP001620">
    <property type="protein sequence ID" value="ACR18568.1"/>
    <property type="molecule type" value="Genomic_DNA"/>
</dbReference>
<dbReference type="RefSeq" id="WP_012732455.1">
    <property type="nucleotide sequence ID" value="NC_012704.1"/>
</dbReference>
<dbReference type="SMR" id="C4LL63"/>
<dbReference type="STRING" id="645127.ckrop_1849"/>
<dbReference type="GeneID" id="92726646"/>
<dbReference type="KEGG" id="ckp:ckrop_1849"/>
<dbReference type="eggNOG" id="COG0050">
    <property type="taxonomic scope" value="Bacteria"/>
</dbReference>
<dbReference type="HOGENOM" id="CLU_007265_0_0_11"/>
<dbReference type="OrthoDB" id="9803139at2"/>
<dbReference type="Proteomes" id="UP000001473">
    <property type="component" value="Chromosome"/>
</dbReference>
<dbReference type="GO" id="GO:0005829">
    <property type="term" value="C:cytosol"/>
    <property type="evidence" value="ECO:0007669"/>
    <property type="project" value="TreeGrafter"/>
</dbReference>
<dbReference type="GO" id="GO:0005525">
    <property type="term" value="F:GTP binding"/>
    <property type="evidence" value="ECO:0007669"/>
    <property type="project" value="UniProtKB-UniRule"/>
</dbReference>
<dbReference type="GO" id="GO:0003924">
    <property type="term" value="F:GTPase activity"/>
    <property type="evidence" value="ECO:0007669"/>
    <property type="project" value="InterPro"/>
</dbReference>
<dbReference type="GO" id="GO:0003746">
    <property type="term" value="F:translation elongation factor activity"/>
    <property type="evidence" value="ECO:0007669"/>
    <property type="project" value="UniProtKB-UniRule"/>
</dbReference>
<dbReference type="CDD" id="cd01884">
    <property type="entry name" value="EF_Tu"/>
    <property type="match status" value="1"/>
</dbReference>
<dbReference type="CDD" id="cd03697">
    <property type="entry name" value="EFTU_II"/>
    <property type="match status" value="1"/>
</dbReference>
<dbReference type="CDD" id="cd03707">
    <property type="entry name" value="EFTU_III"/>
    <property type="match status" value="1"/>
</dbReference>
<dbReference type="FunFam" id="2.40.30.10:FF:000001">
    <property type="entry name" value="Elongation factor Tu"/>
    <property type="match status" value="1"/>
</dbReference>
<dbReference type="FunFam" id="3.40.50.300:FF:000003">
    <property type="entry name" value="Elongation factor Tu"/>
    <property type="match status" value="1"/>
</dbReference>
<dbReference type="Gene3D" id="3.40.50.300">
    <property type="entry name" value="P-loop containing nucleotide triphosphate hydrolases"/>
    <property type="match status" value="1"/>
</dbReference>
<dbReference type="Gene3D" id="2.40.30.10">
    <property type="entry name" value="Translation factors"/>
    <property type="match status" value="2"/>
</dbReference>
<dbReference type="HAMAP" id="MF_00118_B">
    <property type="entry name" value="EF_Tu_B"/>
    <property type="match status" value="1"/>
</dbReference>
<dbReference type="InterPro" id="IPR041709">
    <property type="entry name" value="EF-Tu_GTP-bd"/>
</dbReference>
<dbReference type="InterPro" id="IPR050055">
    <property type="entry name" value="EF-Tu_GTPase"/>
</dbReference>
<dbReference type="InterPro" id="IPR004161">
    <property type="entry name" value="EFTu-like_2"/>
</dbReference>
<dbReference type="InterPro" id="IPR033720">
    <property type="entry name" value="EFTU_2"/>
</dbReference>
<dbReference type="InterPro" id="IPR031157">
    <property type="entry name" value="G_TR_CS"/>
</dbReference>
<dbReference type="InterPro" id="IPR027417">
    <property type="entry name" value="P-loop_NTPase"/>
</dbReference>
<dbReference type="InterPro" id="IPR005225">
    <property type="entry name" value="Small_GTP-bd"/>
</dbReference>
<dbReference type="InterPro" id="IPR000795">
    <property type="entry name" value="T_Tr_GTP-bd_dom"/>
</dbReference>
<dbReference type="InterPro" id="IPR009000">
    <property type="entry name" value="Transl_B-barrel_sf"/>
</dbReference>
<dbReference type="InterPro" id="IPR009001">
    <property type="entry name" value="Transl_elong_EF1A/Init_IF2_C"/>
</dbReference>
<dbReference type="InterPro" id="IPR004541">
    <property type="entry name" value="Transl_elong_EFTu/EF1A_bac/org"/>
</dbReference>
<dbReference type="InterPro" id="IPR004160">
    <property type="entry name" value="Transl_elong_EFTu/EF1A_C"/>
</dbReference>
<dbReference type="NCBIfam" id="TIGR00485">
    <property type="entry name" value="EF-Tu"/>
    <property type="match status" value="1"/>
</dbReference>
<dbReference type="NCBIfam" id="NF000766">
    <property type="entry name" value="PRK00049.1"/>
    <property type="match status" value="1"/>
</dbReference>
<dbReference type="NCBIfam" id="NF009372">
    <property type="entry name" value="PRK12735.1"/>
    <property type="match status" value="1"/>
</dbReference>
<dbReference type="NCBIfam" id="NF009373">
    <property type="entry name" value="PRK12736.1"/>
    <property type="match status" value="1"/>
</dbReference>
<dbReference type="NCBIfam" id="TIGR00231">
    <property type="entry name" value="small_GTP"/>
    <property type="match status" value="1"/>
</dbReference>
<dbReference type="PANTHER" id="PTHR43721:SF22">
    <property type="entry name" value="ELONGATION FACTOR TU, MITOCHONDRIAL"/>
    <property type="match status" value="1"/>
</dbReference>
<dbReference type="PANTHER" id="PTHR43721">
    <property type="entry name" value="ELONGATION FACTOR TU-RELATED"/>
    <property type="match status" value="1"/>
</dbReference>
<dbReference type="Pfam" id="PF00009">
    <property type="entry name" value="GTP_EFTU"/>
    <property type="match status" value="1"/>
</dbReference>
<dbReference type="Pfam" id="PF03144">
    <property type="entry name" value="GTP_EFTU_D2"/>
    <property type="match status" value="1"/>
</dbReference>
<dbReference type="Pfam" id="PF03143">
    <property type="entry name" value="GTP_EFTU_D3"/>
    <property type="match status" value="1"/>
</dbReference>
<dbReference type="PRINTS" id="PR00315">
    <property type="entry name" value="ELONGATNFCT"/>
</dbReference>
<dbReference type="SUPFAM" id="SSF50465">
    <property type="entry name" value="EF-Tu/eEF-1alpha/eIF2-gamma C-terminal domain"/>
    <property type="match status" value="1"/>
</dbReference>
<dbReference type="SUPFAM" id="SSF52540">
    <property type="entry name" value="P-loop containing nucleoside triphosphate hydrolases"/>
    <property type="match status" value="1"/>
</dbReference>
<dbReference type="SUPFAM" id="SSF50447">
    <property type="entry name" value="Translation proteins"/>
    <property type="match status" value="1"/>
</dbReference>
<dbReference type="PROSITE" id="PS00301">
    <property type="entry name" value="G_TR_1"/>
    <property type="match status" value="1"/>
</dbReference>
<dbReference type="PROSITE" id="PS51722">
    <property type="entry name" value="G_TR_2"/>
    <property type="match status" value="1"/>
</dbReference>
<accession>C4LL63</accession>
<keyword id="KW-0963">Cytoplasm</keyword>
<keyword id="KW-0251">Elongation factor</keyword>
<keyword id="KW-0342">GTP-binding</keyword>
<keyword id="KW-0378">Hydrolase</keyword>
<keyword id="KW-0460">Magnesium</keyword>
<keyword id="KW-0479">Metal-binding</keyword>
<keyword id="KW-0547">Nucleotide-binding</keyword>
<keyword id="KW-0648">Protein biosynthesis</keyword>
<keyword id="KW-1185">Reference proteome</keyword>
<reference key="1">
    <citation type="journal article" date="2008" name="J. Biotechnol.">
        <title>Ultrafast pyrosequencing of Corynebacterium kroppenstedtii DSM44385 revealed insights into the physiology of a lipophilic corynebacterium that lacks mycolic acids.</title>
        <authorList>
            <person name="Tauch A."/>
            <person name="Schneider J."/>
            <person name="Szczepanowski R."/>
            <person name="Tilker A."/>
            <person name="Viehoever P."/>
            <person name="Gartemann K.-H."/>
            <person name="Arnold W."/>
            <person name="Blom J."/>
            <person name="Brinkrolf K."/>
            <person name="Brune I."/>
            <person name="Goetker S."/>
            <person name="Weisshaar B."/>
            <person name="Goesmann A."/>
            <person name="Droege M."/>
            <person name="Puehler A."/>
        </authorList>
    </citation>
    <scope>NUCLEOTIDE SEQUENCE [LARGE SCALE GENOMIC DNA]</scope>
    <source>
        <strain>DSM 44385 / JCM 11950 / CIP 105744 / CCUG 35717</strain>
    </source>
</reference>
<comment type="function">
    <text evidence="2">GTP hydrolase that promotes the GTP-dependent binding of aminoacyl-tRNA to the A-site of ribosomes during protein biosynthesis.</text>
</comment>
<comment type="catalytic activity">
    <reaction evidence="2">
        <text>GTP + H2O = GDP + phosphate + H(+)</text>
        <dbReference type="Rhea" id="RHEA:19669"/>
        <dbReference type="ChEBI" id="CHEBI:15377"/>
        <dbReference type="ChEBI" id="CHEBI:15378"/>
        <dbReference type="ChEBI" id="CHEBI:37565"/>
        <dbReference type="ChEBI" id="CHEBI:43474"/>
        <dbReference type="ChEBI" id="CHEBI:58189"/>
        <dbReference type="EC" id="3.6.5.3"/>
    </reaction>
    <physiologicalReaction direction="left-to-right" evidence="2">
        <dbReference type="Rhea" id="RHEA:19670"/>
    </physiologicalReaction>
</comment>
<comment type="subunit">
    <text evidence="2">Monomer.</text>
</comment>
<comment type="subcellular location">
    <subcellularLocation>
        <location evidence="2">Cytoplasm</location>
    </subcellularLocation>
</comment>
<comment type="similarity">
    <text evidence="2">Belongs to the TRAFAC class translation factor GTPase superfamily. Classic translation factor GTPase family. EF-Tu/EF-1A subfamily.</text>
</comment>
<name>EFTU_CORK4</name>
<organism>
    <name type="scientific">Corynebacterium kroppenstedtii (strain DSM 44385 / JCM 11950 / CIP 105744 / CCUG 35717)</name>
    <dbReference type="NCBI Taxonomy" id="645127"/>
    <lineage>
        <taxon>Bacteria</taxon>
        <taxon>Bacillati</taxon>
        <taxon>Actinomycetota</taxon>
        <taxon>Actinomycetes</taxon>
        <taxon>Mycobacteriales</taxon>
        <taxon>Corynebacteriaceae</taxon>
        <taxon>Corynebacterium</taxon>
    </lineage>
</organism>
<proteinExistence type="inferred from homology"/>
<sequence>MAKAKFDRSKPHVNIGTIGHVDHGKTTTTAAITKVLSEKYPEENQAFAFDAIDKAPEEKERGITINIAHVEYSTPKRHYAHVDAPGHADYIKNMITGAAQMDGAILVVAATDGPMPQTREHVLLARQVGVPYILVALNKCDMVDDEDLIELVEMEVRELLAEQDFDEDAPIVHISALKALEGDEKWEQSILDLMDACDESIPDPVRETDKPFLMPIEDIFTITGRGTVVTGRVERGKLNINDDVEILGIKEKSQNTTVTGIEMFRKQLDYAEAGDNCGLLLRGTKREDVERGQIVAKPGAYTPHTEFEGSVYVLSKDEGGRHTPFFDNYRPQFYFRTTDVTGVVKLPEGTEMVMPGDNVDMSVTLIQPVAMDEGLRFAIREGGRTVGAGRVTKINK</sequence>
<feature type="chain" id="PRO_1000203005" description="Elongation factor Tu">
    <location>
        <begin position="1"/>
        <end position="396"/>
    </location>
</feature>
<feature type="domain" description="tr-type G">
    <location>
        <begin position="10"/>
        <end position="205"/>
    </location>
</feature>
<feature type="region of interest" description="G1" evidence="1">
    <location>
        <begin position="19"/>
        <end position="26"/>
    </location>
</feature>
<feature type="region of interest" description="G2" evidence="1">
    <location>
        <begin position="62"/>
        <end position="66"/>
    </location>
</feature>
<feature type="region of interest" description="G3" evidence="1">
    <location>
        <begin position="83"/>
        <end position="86"/>
    </location>
</feature>
<feature type="region of interest" description="G4" evidence="1">
    <location>
        <begin position="138"/>
        <end position="141"/>
    </location>
</feature>
<feature type="region of interest" description="G5" evidence="1">
    <location>
        <begin position="175"/>
        <end position="177"/>
    </location>
</feature>
<feature type="binding site" evidence="2">
    <location>
        <begin position="19"/>
        <end position="26"/>
    </location>
    <ligand>
        <name>GTP</name>
        <dbReference type="ChEBI" id="CHEBI:37565"/>
    </ligand>
</feature>
<feature type="binding site" evidence="2">
    <location>
        <position position="26"/>
    </location>
    <ligand>
        <name>Mg(2+)</name>
        <dbReference type="ChEBI" id="CHEBI:18420"/>
    </ligand>
</feature>
<feature type="binding site" evidence="2">
    <location>
        <begin position="83"/>
        <end position="87"/>
    </location>
    <ligand>
        <name>GTP</name>
        <dbReference type="ChEBI" id="CHEBI:37565"/>
    </ligand>
</feature>
<feature type="binding site" evidence="2">
    <location>
        <begin position="138"/>
        <end position="141"/>
    </location>
    <ligand>
        <name>GTP</name>
        <dbReference type="ChEBI" id="CHEBI:37565"/>
    </ligand>
</feature>
<evidence type="ECO:0000250" key="1"/>
<evidence type="ECO:0000255" key="2">
    <source>
        <dbReference type="HAMAP-Rule" id="MF_00118"/>
    </source>
</evidence>